<feature type="chain" id="PRO_0000102435" description="Endoribonuclease YbeY">
    <location>
        <begin position="1"/>
        <end position="161"/>
    </location>
</feature>
<feature type="binding site" evidence="1">
    <location>
        <position position="120"/>
    </location>
    <ligand>
        <name>Zn(2+)</name>
        <dbReference type="ChEBI" id="CHEBI:29105"/>
        <note>catalytic</note>
    </ligand>
</feature>
<feature type="binding site" evidence="1">
    <location>
        <position position="124"/>
    </location>
    <ligand>
        <name>Zn(2+)</name>
        <dbReference type="ChEBI" id="CHEBI:29105"/>
        <note>catalytic</note>
    </ligand>
</feature>
<feature type="binding site" evidence="1">
    <location>
        <position position="130"/>
    </location>
    <ligand>
        <name>Zn(2+)</name>
        <dbReference type="ChEBI" id="CHEBI:29105"/>
        <note>catalytic</note>
    </ligand>
</feature>
<gene>
    <name evidence="1" type="primary">ybeY</name>
    <name type="ordered locus">TC_0705</name>
</gene>
<dbReference type="EC" id="3.1.-.-" evidence="1"/>
<dbReference type="EMBL" id="AE002160">
    <property type="protein sequence ID" value="AAF39519.1"/>
    <property type="molecule type" value="Genomic_DNA"/>
</dbReference>
<dbReference type="PIR" id="B81674">
    <property type="entry name" value="B81674"/>
</dbReference>
<dbReference type="SMR" id="Q9PJX1"/>
<dbReference type="KEGG" id="cmu:TC_0705"/>
<dbReference type="eggNOG" id="COG0319">
    <property type="taxonomic scope" value="Bacteria"/>
</dbReference>
<dbReference type="HOGENOM" id="CLU_106710_2_0_0"/>
<dbReference type="OrthoDB" id="9807740at2"/>
<dbReference type="Proteomes" id="UP000000800">
    <property type="component" value="Chromosome"/>
</dbReference>
<dbReference type="GO" id="GO:0005737">
    <property type="term" value="C:cytoplasm"/>
    <property type="evidence" value="ECO:0007669"/>
    <property type="project" value="UniProtKB-SubCell"/>
</dbReference>
<dbReference type="GO" id="GO:0004222">
    <property type="term" value="F:metalloendopeptidase activity"/>
    <property type="evidence" value="ECO:0007669"/>
    <property type="project" value="InterPro"/>
</dbReference>
<dbReference type="GO" id="GO:0004521">
    <property type="term" value="F:RNA endonuclease activity"/>
    <property type="evidence" value="ECO:0007669"/>
    <property type="project" value="UniProtKB-UniRule"/>
</dbReference>
<dbReference type="GO" id="GO:0008270">
    <property type="term" value="F:zinc ion binding"/>
    <property type="evidence" value="ECO:0007669"/>
    <property type="project" value="UniProtKB-UniRule"/>
</dbReference>
<dbReference type="GO" id="GO:0006364">
    <property type="term" value="P:rRNA processing"/>
    <property type="evidence" value="ECO:0007669"/>
    <property type="project" value="UniProtKB-UniRule"/>
</dbReference>
<dbReference type="Gene3D" id="3.40.390.30">
    <property type="entry name" value="Metalloproteases ('zincins'), catalytic domain"/>
    <property type="match status" value="1"/>
</dbReference>
<dbReference type="HAMAP" id="MF_00009">
    <property type="entry name" value="Endoribonucl_YbeY"/>
    <property type="match status" value="1"/>
</dbReference>
<dbReference type="InterPro" id="IPR023091">
    <property type="entry name" value="MetalPrtase_cat_dom_sf_prd"/>
</dbReference>
<dbReference type="InterPro" id="IPR002036">
    <property type="entry name" value="YbeY"/>
</dbReference>
<dbReference type="NCBIfam" id="TIGR00043">
    <property type="entry name" value="rRNA maturation RNase YbeY"/>
    <property type="match status" value="1"/>
</dbReference>
<dbReference type="Pfam" id="PF02130">
    <property type="entry name" value="YbeY"/>
    <property type="match status" value="1"/>
</dbReference>
<dbReference type="SUPFAM" id="SSF55486">
    <property type="entry name" value="Metalloproteases ('zincins'), catalytic domain"/>
    <property type="match status" value="1"/>
</dbReference>
<name>YBEY_CHLMU</name>
<protein>
    <recommendedName>
        <fullName evidence="1">Endoribonuclease YbeY</fullName>
        <ecNumber evidence="1">3.1.-.-</ecNumber>
    </recommendedName>
</protein>
<sequence>MLILDRSSPQIFISNEQQDVDIDLQSVQRLVILFLELQKVSTDQVYIYFLSDAALAQLHDEQFSDPSLTDTITLPIDRPGIQSFPHVLGEAFVSPRAAMRFLGQYTEAQLYHEISRYVVHSLLHMLGYDDQTDEDKRIMREQEDSSLTFLAQNQALLHPTV</sequence>
<organism>
    <name type="scientific">Chlamydia muridarum (strain MoPn / Nigg)</name>
    <dbReference type="NCBI Taxonomy" id="243161"/>
    <lineage>
        <taxon>Bacteria</taxon>
        <taxon>Pseudomonadati</taxon>
        <taxon>Chlamydiota</taxon>
        <taxon>Chlamydiia</taxon>
        <taxon>Chlamydiales</taxon>
        <taxon>Chlamydiaceae</taxon>
        <taxon>Chlamydia/Chlamydophila group</taxon>
        <taxon>Chlamydia</taxon>
    </lineage>
</organism>
<proteinExistence type="inferred from homology"/>
<keyword id="KW-0963">Cytoplasm</keyword>
<keyword id="KW-0255">Endonuclease</keyword>
<keyword id="KW-0378">Hydrolase</keyword>
<keyword id="KW-0479">Metal-binding</keyword>
<keyword id="KW-0540">Nuclease</keyword>
<keyword id="KW-0690">Ribosome biogenesis</keyword>
<keyword id="KW-0698">rRNA processing</keyword>
<keyword id="KW-0862">Zinc</keyword>
<accession>Q9PJX1</accession>
<reference key="1">
    <citation type="journal article" date="2000" name="Nucleic Acids Res.">
        <title>Genome sequences of Chlamydia trachomatis MoPn and Chlamydia pneumoniae AR39.</title>
        <authorList>
            <person name="Read T.D."/>
            <person name="Brunham R.C."/>
            <person name="Shen C."/>
            <person name="Gill S.R."/>
            <person name="Heidelberg J.F."/>
            <person name="White O."/>
            <person name="Hickey E.K."/>
            <person name="Peterson J.D."/>
            <person name="Utterback T.R."/>
            <person name="Berry K.J."/>
            <person name="Bass S."/>
            <person name="Linher K.D."/>
            <person name="Weidman J.F."/>
            <person name="Khouri H.M."/>
            <person name="Craven B."/>
            <person name="Bowman C."/>
            <person name="Dodson R.J."/>
            <person name="Gwinn M.L."/>
            <person name="Nelson W.C."/>
            <person name="DeBoy R.T."/>
            <person name="Kolonay J.F."/>
            <person name="McClarty G."/>
            <person name="Salzberg S.L."/>
            <person name="Eisen J.A."/>
            <person name="Fraser C.M."/>
        </authorList>
    </citation>
    <scope>NUCLEOTIDE SEQUENCE [LARGE SCALE GENOMIC DNA]</scope>
    <source>
        <strain>MoPn / Nigg</strain>
    </source>
</reference>
<evidence type="ECO:0000255" key="1">
    <source>
        <dbReference type="HAMAP-Rule" id="MF_00009"/>
    </source>
</evidence>
<comment type="function">
    <text evidence="1">Single strand-specific metallo-endoribonuclease involved in late-stage 70S ribosome quality control and in maturation of the 3' terminus of the 16S rRNA.</text>
</comment>
<comment type="cofactor">
    <cofactor evidence="1">
        <name>Zn(2+)</name>
        <dbReference type="ChEBI" id="CHEBI:29105"/>
    </cofactor>
    <text evidence="1">Binds 1 zinc ion.</text>
</comment>
<comment type="subcellular location">
    <subcellularLocation>
        <location evidence="1">Cytoplasm</location>
    </subcellularLocation>
</comment>
<comment type="similarity">
    <text evidence="1">Belongs to the endoribonuclease YbeY family.</text>
</comment>